<comment type="function">
    <text evidence="1">Cell wall formation. Catalyzes the addition of glutamate to the nucleotide precursor UDP-N-acetylmuramoyl-L-alanine (UMA).</text>
</comment>
<comment type="catalytic activity">
    <reaction evidence="1">
        <text>UDP-N-acetyl-alpha-D-muramoyl-L-alanine + D-glutamate + ATP = UDP-N-acetyl-alpha-D-muramoyl-L-alanyl-D-glutamate + ADP + phosphate + H(+)</text>
        <dbReference type="Rhea" id="RHEA:16429"/>
        <dbReference type="ChEBI" id="CHEBI:15378"/>
        <dbReference type="ChEBI" id="CHEBI:29986"/>
        <dbReference type="ChEBI" id="CHEBI:30616"/>
        <dbReference type="ChEBI" id="CHEBI:43474"/>
        <dbReference type="ChEBI" id="CHEBI:83898"/>
        <dbReference type="ChEBI" id="CHEBI:83900"/>
        <dbReference type="ChEBI" id="CHEBI:456216"/>
        <dbReference type="EC" id="6.3.2.9"/>
    </reaction>
</comment>
<comment type="pathway">
    <text evidence="1">Cell wall biogenesis; peptidoglycan biosynthesis.</text>
</comment>
<comment type="subcellular location">
    <subcellularLocation>
        <location evidence="1">Cytoplasm</location>
    </subcellularLocation>
</comment>
<comment type="similarity">
    <text evidence="1">Belongs to the MurCDEF family.</text>
</comment>
<accession>Q9JSZ5</accession>
<accession>A1ITQ0</accession>
<proteinExistence type="inferred from homology"/>
<evidence type="ECO:0000255" key="1">
    <source>
        <dbReference type="HAMAP-Rule" id="MF_00639"/>
    </source>
</evidence>
<feature type="chain" id="PRO_0000109048" description="UDP-N-acetylmuramoylalanine--D-glutamate ligase">
    <location>
        <begin position="1"/>
        <end position="445"/>
    </location>
</feature>
<feature type="binding site" evidence="1">
    <location>
        <begin position="117"/>
        <end position="123"/>
    </location>
    <ligand>
        <name>ATP</name>
        <dbReference type="ChEBI" id="CHEBI:30616"/>
    </ligand>
</feature>
<reference key="1">
    <citation type="journal article" date="2000" name="Nature">
        <title>Complete DNA sequence of a serogroup A strain of Neisseria meningitidis Z2491.</title>
        <authorList>
            <person name="Parkhill J."/>
            <person name="Achtman M."/>
            <person name="James K.D."/>
            <person name="Bentley S.D."/>
            <person name="Churcher C.M."/>
            <person name="Klee S.R."/>
            <person name="Morelli G."/>
            <person name="Basham D."/>
            <person name="Brown D."/>
            <person name="Chillingworth T."/>
            <person name="Davies R.M."/>
            <person name="Davis P."/>
            <person name="Devlin K."/>
            <person name="Feltwell T."/>
            <person name="Hamlin N."/>
            <person name="Holroyd S."/>
            <person name="Jagels K."/>
            <person name="Leather S."/>
            <person name="Moule S."/>
            <person name="Mungall K.L."/>
            <person name="Quail M.A."/>
            <person name="Rajandream M.A."/>
            <person name="Rutherford K.M."/>
            <person name="Simmonds M."/>
            <person name="Skelton J."/>
            <person name="Whitehead S."/>
            <person name="Spratt B.G."/>
            <person name="Barrell B.G."/>
        </authorList>
    </citation>
    <scope>NUCLEOTIDE SEQUENCE [LARGE SCALE GENOMIC DNA]</scope>
    <source>
        <strain>DSM 15465 / Z2491</strain>
    </source>
</reference>
<dbReference type="EC" id="6.3.2.9" evidence="1"/>
<dbReference type="EMBL" id="AL157959">
    <property type="protein sequence ID" value="CAM09167.1"/>
    <property type="molecule type" value="Genomic_DNA"/>
</dbReference>
<dbReference type="PIR" id="D81777">
    <property type="entry name" value="D81777"/>
</dbReference>
<dbReference type="RefSeq" id="WP_002246804.1">
    <property type="nucleotide sequence ID" value="NC_003116.1"/>
</dbReference>
<dbReference type="SMR" id="Q9JSZ5"/>
<dbReference type="EnsemblBacteria" id="CAM09167">
    <property type="protein sequence ID" value="CAM09167"/>
    <property type="gene ID" value="NMA2064"/>
</dbReference>
<dbReference type="GeneID" id="93387517"/>
<dbReference type="KEGG" id="nma:NMA2064"/>
<dbReference type="HOGENOM" id="CLU_032540_1_0_4"/>
<dbReference type="UniPathway" id="UPA00219"/>
<dbReference type="Proteomes" id="UP000000626">
    <property type="component" value="Chromosome"/>
</dbReference>
<dbReference type="GO" id="GO:0005737">
    <property type="term" value="C:cytoplasm"/>
    <property type="evidence" value="ECO:0007669"/>
    <property type="project" value="UniProtKB-SubCell"/>
</dbReference>
<dbReference type="GO" id="GO:0005524">
    <property type="term" value="F:ATP binding"/>
    <property type="evidence" value="ECO:0007669"/>
    <property type="project" value="UniProtKB-UniRule"/>
</dbReference>
<dbReference type="GO" id="GO:0008764">
    <property type="term" value="F:UDP-N-acetylmuramoylalanine-D-glutamate ligase activity"/>
    <property type="evidence" value="ECO:0007669"/>
    <property type="project" value="UniProtKB-UniRule"/>
</dbReference>
<dbReference type="GO" id="GO:0051301">
    <property type="term" value="P:cell division"/>
    <property type="evidence" value="ECO:0007669"/>
    <property type="project" value="UniProtKB-KW"/>
</dbReference>
<dbReference type="GO" id="GO:0071555">
    <property type="term" value="P:cell wall organization"/>
    <property type="evidence" value="ECO:0007669"/>
    <property type="project" value="UniProtKB-KW"/>
</dbReference>
<dbReference type="GO" id="GO:0009252">
    <property type="term" value="P:peptidoglycan biosynthetic process"/>
    <property type="evidence" value="ECO:0007669"/>
    <property type="project" value="UniProtKB-UniRule"/>
</dbReference>
<dbReference type="GO" id="GO:0008360">
    <property type="term" value="P:regulation of cell shape"/>
    <property type="evidence" value="ECO:0007669"/>
    <property type="project" value="UniProtKB-KW"/>
</dbReference>
<dbReference type="Gene3D" id="3.90.190.20">
    <property type="entry name" value="Mur ligase, C-terminal domain"/>
    <property type="match status" value="1"/>
</dbReference>
<dbReference type="Gene3D" id="3.40.1190.10">
    <property type="entry name" value="Mur-like, catalytic domain"/>
    <property type="match status" value="1"/>
</dbReference>
<dbReference type="Gene3D" id="3.40.50.720">
    <property type="entry name" value="NAD(P)-binding Rossmann-like Domain"/>
    <property type="match status" value="1"/>
</dbReference>
<dbReference type="HAMAP" id="MF_00639">
    <property type="entry name" value="MurD"/>
    <property type="match status" value="1"/>
</dbReference>
<dbReference type="InterPro" id="IPR036565">
    <property type="entry name" value="Mur-like_cat_sf"/>
</dbReference>
<dbReference type="InterPro" id="IPR004101">
    <property type="entry name" value="Mur_ligase_C"/>
</dbReference>
<dbReference type="InterPro" id="IPR036615">
    <property type="entry name" value="Mur_ligase_C_dom_sf"/>
</dbReference>
<dbReference type="InterPro" id="IPR013221">
    <property type="entry name" value="Mur_ligase_cen"/>
</dbReference>
<dbReference type="InterPro" id="IPR005762">
    <property type="entry name" value="MurD"/>
</dbReference>
<dbReference type="NCBIfam" id="TIGR01087">
    <property type="entry name" value="murD"/>
    <property type="match status" value="1"/>
</dbReference>
<dbReference type="PANTHER" id="PTHR43692">
    <property type="entry name" value="UDP-N-ACETYLMURAMOYLALANINE--D-GLUTAMATE LIGASE"/>
    <property type="match status" value="1"/>
</dbReference>
<dbReference type="PANTHER" id="PTHR43692:SF1">
    <property type="entry name" value="UDP-N-ACETYLMURAMOYLALANINE--D-GLUTAMATE LIGASE"/>
    <property type="match status" value="1"/>
</dbReference>
<dbReference type="Pfam" id="PF02875">
    <property type="entry name" value="Mur_ligase_C"/>
    <property type="match status" value="1"/>
</dbReference>
<dbReference type="Pfam" id="PF08245">
    <property type="entry name" value="Mur_ligase_M"/>
    <property type="match status" value="1"/>
</dbReference>
<dbReference type="Pfam" id="PF21799">
    <property type="entry name" value="MurD-like_N"/>
    <property type="match status" value="1"/>
</dbReference>
<dbReference type="SUPFAM" id="SSF51984">
    <property type="entry name" value="MurCD N-terminal domain"/>
    <property type="match status" value="1"/>
</dbReference>
<dbReference type="SUPFAM" id="SSF53623">
    <property type="entry name" value="MurD-like peptide ligases, catalytic domain"/>
    <property type="match status" value="1"/>
</dbReference>
<dbReference type="SUPFAM" id="SSF53244">
    <property type="entry name" value="MurD-like peptide ligases, peptide-binding domain"/>
    <property type="match status" value="1"/>
</dbReference>
<gene>
    <name evidence="1" type="primary">murD</name>
    <name type="ordered locus">NMA2064</name>
</gene>
<keyword id="KW-0067">ATP-binding</keyword>
<keyword id="KW-0131">Cell cycle</keyword>
<keyword id="KW-0132">Cell division</keyword>
<keyword id="KW-0133">Cell shape</keyword>
<keyword id="KW-0961">Cell wall biogenesis/degradation</keyword>
<keyword id="KW-0963">Cytoplasm</keyword>
<keyword id="KW-0436">Ligase</keyword>
<keyword id="KW-0547">Nucleotide-binding</keyword>
<keyword id="KW-0573">Peptidoglycan synthesis</keyword>
<organism>
    <name type="scientific">Neisseria meningitidis serogroup A / serotype 4A (strain DSM 15465 / Z2491)</name>
    <dbReference type="NCBI Taxonomy" id="122587"/>
    <lineage>
        <taxon>Bacteria</taxon>
        <taxon>Pseudomonadati</taxon>
        <taxon>Pseudomonadota</taxon>
        <taxon>Betaproteobacteria</taxon>
        <taxon>Neisseriales</taxon>
        <taxon>Neisseriaceae</taxon>
        <taxon>Neisseria</taxon>
    </lineage>
</organism>
<sequence length="445" mass="48083">MTFQNKKILVAGLGGTGISMIAYLRKNGAEVAAYDAELKPERVSQIGKMFDGLVFYTGRLKDALSNGFDILALSPGISERQPDIEAFKRNGGRVLGDIELLADIVNRRGDKVIAITGSNGKTTVTSLVGYLCIKCGLDTVIAGNIGAPVLEAELQREGKKADVWVLELSSFQLENTESLRPTAATVLNISEDHLDRYDDLLDYAHTKAKIFRGDGVQVLNADDAFCRAMKRAGREVKWFSLEYEADFWLERETGRLKQGNEDLIATQDIPLQGLHNATNVMAAVALCEAVGLPREALLEHVKTFQGLPHRVEKIGEKNGVVFIDDSKGTNVGATAAAIAGLQNPLFVILGGMGKGQDFTPLRDALAGKAKGVFLIGVDAPQIRRDLDGCDLNMTDCATLEEAVQKAYAQAEAGDIVLLSPACASFDMFKGYAHRSEVFIGAFKAL</sequence>
<protein>
    <recommendedName>
        <fullName evidence="1">UDP-N-acetylmuramoylalanine--D-glutamate ligase</fullName>
        <ecNumber evidence="1">6.3.2.9</ecNumber>
    </recommendedName>
    <alternativeName>
        <fullName evidence="1">D-glutamic acid-adding enzyme</fullName>
    </alternativeName>
    <alternativeName>
        <fullName evidence="1">UDP-N-acetylmuramoyl-L-alanyl-D-glutamate synthetase</fullName>
    </alternativeName>
</protein>
<name>MURD_NEIMA</name>